<comment type="function">
    <text evidence="1">Attaches a formyl group to the free amino group of methionyl-tRNA(fMet). The formyl group appears to play a dual role in the initiator identity of N-formylmethionyl-tRNA by promoting its recognition by IF2 and preventing the misappropriation of this tRNA by the elongation apparatus.</text>
</comment>
<comment type="catalytic activity">
    <reaction evidence="1">
        <text>L-methionyl-tRNA(fMet) + (6R)-10-formyltetrahydrofolate = N-formyl-L-methionyl-tRNA(fMet) + (6S)-5,6,7,8-tetrahydrofolate + H(+)</text>
        <dbReference type="Rhea" id="RHEA:24380"/>
        <dbReference type="Rhea" id="RHEA-COMP:9952"/>
        <dbReference type="Rhea" id="RHEA-COMP:9953"/>
        <dbReference type="ChEBI" id="CHEBI:15378"/>
        <dbReference type="ChEBI" id="CHEBI:57453"/>
        <dbReference type="ChEBI" id="CHEBI:78530"/>
        <dbReference type="ChEBI" id="CHEBI:78844"/>
        <dbReference type="ChEBI" id="CHEBI:195366"/>
        <dbReference type="EC" id="2.1.2.9"/>
    </reaction>
</comment>
<comment type="similarity">
    <text evidence="1 2">Belongs to the Fmt family.</text>
</comment>
<feature type="chain" id="PRO_0000082925" description="Methionyl-tRNA formyltransferase">
    <location>
        <begin position="1"/>
        <end position="312"/>
    </location>
</feature>
<feature type="binding site" evidence="1">
    <location>
        <begin position="107"/>
        <end position="110"/>
    </location>
    <ligand>
        <name>(6S)-5,6,7,8-tetrahydrofolate</name>
        <dbReference type="ChEBI" id="CHEBI:57453"/>
    </ligand>
</feature>
<dbReference type="EC" id="2.1.2.9" evidence="1"/>
<dbReference type="EMBL" id="AE000783">
    <property type="protein sequence ID" value="AAC66446.1"/>
    <property type="molecule type" value="Genomic_DNA"/>
</dbReference>
<dbReference type="PIR" id="H70107">
    <property type="entry name" value="H70107"/>
</dbReference>
<dbReference type="RefSeq" id="NP_212198.1">
    <property type="nucleotide sequence ID" value="NC_001318.1"/>
</dbReference>
<dbReference type="RefSeq" id="WP_002658299.1">
    <property type="nucleotide sequence ID" value="NC_001318.1"/>
</dbReference>
<dbReference type="SMR" id="O51091"/>
<dbReference type="STRING" id="224326.BB_0064"/>
<dbReference type="PaxDb" id="224326-BB_0064"/>
<dbReference type="EnsemblBacteria" id="AAC66446">
    <property type="protein sequence ID" value="AAC66446"/>
    <property type="gene ID" value="BB_0064"/>
</dbReference>
<dbReference type="GeneID" id="56568153"/>
<dbReference type="KEGG" id="bbu:BB_0064"/>
<dbReference type="PATRIC" id="fig|224326.49.peg.462"/>
<dbReference type="HOGENOM" id="CLU_033347_1_1_12"/>
<dbReference type="OrthoDB" id="9802815at2"/>
<dbReference type="Proteomes" id="UP000001807">
    <property type="component" value="Chromosome"/>
</dbReference>
<dbReference type="GO" id="GO:0005829">
    <property type="term" value="C:cytosol"/>
    <property type="evidence" value="ECO:0007669"/>
    <property type="project" value="TreeGrafter"/>
</dbReference>
<dbReference type="GO" id="GO:0004479">
    <property type="term" value="F:methionyl-tRNA formyltransferase activity"/>
    <property type="evidence" value="ECO:0007669"/>
    <property type="project" value="UniProtKB-UniRule"/>
</dbReference>
<dbReference type="CDD" id="cd08646">
    <property type="entry name" value="FMT_core_Met-tRNA-FMT_N"/>
    <property type="match status" value="1"/>
</dbReference>
<dbReference type="CDD" id="cd08704">
    <property type="entry name" value="Met_tRNA_FMT_C"/>
    <property type="match status" value="1"/>
</dbReference>
<dbReference type="Gene3D" id="3.10.25.10">
    <property type="entry name" value="Formyl transferase, C-terminal domain"/>
    <property type="match status" value="1"/>
</dbReference>
<dbReference type="Gene3D" id="3.40.50.170">
    <property type="entry name" value="Formyl transferase, N-terminal domain"/>
    <property type="match status" value="1"/>
</dbReference>
<dbReference type="HAMAP" id="MF_00182">
    <property type="entry name" value="Formyl_trans"/>
    <property type="match status" value="1"/>
</dbReference>
<dbReference type="InterPro" id="IPR005794">
    <property type="entry name" value="Fmt"/>
</dbReference>
<dbReference type="InterPro" id="IPR005793">
    <property type="entry name" value="Formyl_trans_C"/>
</dbReference>
<dbReference type="InterPro" id="IPR037022">
    <property type="entry name" value="Formyl_trans_C_sf"/>
</dbReference>
<dbReference type="InterPro" id="IPR002376">
    <property type="entry name" value="Formyl_transf_N"/>
</dbReference>
<dbReference type="InterPro" id="IPR036477">
    <property type="entry name" value="Formyl_transf_N_sf"/>
</dbReference>
<dbReference type="InterPro" id="IPR011034">
    <property type="entry name" value="Formyl_transferase-like_C_sf"/>
</dbReference>
<dbReference type="InterPro" id="IPR044135">
    <property type="entry name" value="Met-tRNA-FMT_C"/>
</dbReference>
<dbReference type="InterPro" id="IPR041711">
    <property type="entry name" value="Met-tRNA-FMT_N"/>
</dbReference>
<dbReference type="NCBIfam" id="TIGR00460">
    <property type="entry name" value="fmt"/>
    <property type="match status" value="1"/>
</dbReference>
<dbReference type="PANTHER" id="PTHR11138">
    <property type="entry name" value="METHIONYL-TRNA FORMYLTRANSFERASE"/>
    <property type="match status" value="1"/>
</dbReference>
<dbReference type="PANTHER" id="PTHR11138:SF5">
    <property type="entry name" value="METHIONYL-TRNA FORMYLTRANSFERASE, MITOCHONDRIAL"/>
    <property type="match status" value="1"/>
</dbReference>
<dbReference type="Pfam" id="PF02911">
    <property type="entry name" value="Formyl_trans_C"/>
    <property type="match status" value="1"/>
</dbReference>
<dbReference type="Pfam" id="PF00551">
    <property type="entry name" value="Formyl_trans_N"/>
    <property type="match status" value="1"/>
</dbReference>
<dbReference type="SUPFAM" id="SSF50486">
    <property type="entry name" value="FMT C-terminal domain-like"/>
    <property type="match status" value="1"/>
</dbReference>
<dbReference type="SUPFAM" id="SSF53328">
    <property type="entry name" value="Formyltransferase"/>
    <property type="match status" value="1"/>
</dbReference>
<organism>
    <name type="scientific">Borreliella burgdorferi (strain ATCC 35210 / DSM 4680 / CIP 102532 / B31)</name>
    <name type="common">Borrelia burgdorferi</name>
    <dbReference type="NCBI Taxonomy" id="224326"/>
    <lineage>
        <taxon>Bacteria</taxon>
        <taxon>Pseudomonadati</taxon>
        <taxon>Spirochaetota</taxon>
        <taxon>Spirochaetia</taxon>
        <taxon>Spirochaetales</taxon>
        <taxon>Borreliaceae</taxon>
        <taxon>Borreliella</taxon>
    </lineage>
</organism>
<name>FMT_BORBU</name>
<sequence>MKIFFVSSSSIALEVFKEIVKHYEVVGVLTLPDRPKGRGQKLSQNVIKSEAIARNIKVLDPLILDDNVLNLVRDLNPDLMLVFSYGKIFKKEFLDLFPKGCINVHPSLLPKYRGVSPIQSAILNGDCVSGVTIQSMALEMDSGNILVQKNFKIRSYDTSHDISKLVSSLSPSLVLEALEKISKGFLGIPQKSSEATFCSFLKKESGFIDFNLSAFEIKNKINACNPWPLVRVRLDYNDIIFHRADFLEVDLYKERKIGEIVDFNPEKGLFVNTGKGILLLLEVQRPGRKVLDFKSFYNGSRQLIGQVFSSIE</sequence>
<accession>O51091</accession>
<reference key="1">
    <citation type="journal article" date="1997" name="Nature">
        <title>Genomic sequence of a Lyme disease spirochaete, Borrelia burgdorferi.</title>
        <authorList>
            <person name="Fraser C.M."/>
            <person name="Casjens S."/>
            <person name="Huang W.M."/>
            <person name="Sutton G.G."/>
            <person name="Clayton R.A."/>
            <person name="Lathigra R."/>
            <person name="White O."/>
            <person name="Ketchum K.A."/>
            <person name="Dodson R.J."/>
            <person name="Hickey E.K."/>
            <person name="Gwinn M.L."/>
            <person name="Dougherty B.A."/>
            <person name="Tomb J.-F."/>
            <person name="Fleischmann R.D."/>
            <person name="Richardson D.L."/>
            <person name="Peterson J.D."/>
            <person name="Kerlavage A.R."/>
            <person name="Quackenbush J."/>
            <person name="Salzberg S.L."/>
            <person name="Hanson M."/>
            <person name="van Vugt R."/>
            <person name="Palmer N."/>
            <person name="Adams M.D."/>
            <person name="Gocayne J.D."/>
            <person name="Weidman J.F."/>
            <person name="Utterback T.R."/>
            <person name="Watthey L."/>
            <person name="McDonald L.A."/>
            <person name="Artiach P."/>
            <person name="Bowman C."/>
            <person name="Garland S.A."/>
            <person name="Fujii C."/>
            <person name="Cotton M.D."/>
            <person name="Horst K."/>
            <person name="Roberts K.M."/>
            <person name="Hatch B."/>
            <person name="Smith H.O."/>
            <person name="Venter J.C."/>
        </authorList>
    </citation>
    <scope>NUCLEOTIDE SEQUENCE [LARGE SCALE GENOMIC DNA]</scope>
    <source>
        <strain>ATCC 35210 / DSM 4680 / CIP 102532 / B31</strain>
    </source>
</reference>
<protein>
    <recommendedName>
        <fullName evidence="1">Methionyl-tRNA formyltransferase</fullName>
        <ecNumber evidence="1">2.1.2.9</ecNumber>
    </recommendedName>
</protein>
<evidence type="ECO:0000255" key="1">
    <source>
        <dbReference type="HAMAP-Rule" id="MF_00182"/>
    </source>
</evidence>
<evidence type="ECO:0000305" key="2"/>
<keyword id="KW-0648">Protein biosynthesis</keyword>
<keyword id="KW-1185">Reference proteome</keyword>
<keyword id="KW-0808">Transferase</keyword>
<proteinExistence type="inferred from homology"/>
<gene>
    <name evidence="1" type="primary">fmt</name>
    <name type="ordered locus">BB_0064</name>
</gene>